<comment type="function">
    <text evidence="1">Required for the first step of histidine biosynthesis. May allow the feedback regulation of ATP phosphoribosyltransferase activity by histidine.</text>
</comment>
<comment type="pathway">
    <text evidence="1">Amino-acid biosynthesis; L-histidine biosynthesis; L-histidine from 5-phospho-alpha-D-ribose 1-diphosphate: step 1/9.</text>
</comment>
<comment type="subunit">
    <text evidence="1">Heteromultimer composed of HisG and HisZ subunits.</text>
</comment>
<comment type="subcellular location">
    <subcellularLocation>
        <location evidence="1">Cytoplasm</location>
    </subcellularLocation>
</comment>
<comment type="miscellaneous">
    <text>This function is generally fulfilled by the C-terminal part of HisG, which is missing in some bacteria such as this one.</text>
</comment>
<comment type="similarity">
    <text evidence="1">Belongs to the class-II aminoacyl-tRNA synthetase family. HisZ subfamily.</text>
</comment>
<keyword id="KW-0028">Amino-acid biosynthesis</keyword>
<keyword id="KW-0963">Cytoplasm</keyword>
<keyword id="KW-0368">Histidine biosynthesis</keyword>
<accession>A6U6I1</accession>
<name>HISZ_SINMW</name>
<gene>
    <name evidence="1" type="primary">hisZ</name>
    <name type="ordered locus">Smed_0404</name>
</gene>
<reference key="1">
    <citation type="submission" date="2007-06" db="EMBL/GenBank/DDBJ databases">
        <title>Complete sequence of Sinorhizobium medicae WSM419 chromosome.</title>
        <authorList>
            <consortium name="US DOE Joint Genome Institute"/>
            <person name="Copeland A."/>
            <person name="Lucas S."/>
            <person name="Lapidus A."/>
            <person name="Barry K."/>
            <person name="Glavina del Rio T."/>
            <person name="Dalin E."/>
            <person name="Tice H."/>
            <person name="Pitluck S."/>
            <person name="Chain P."/>
            <person name="Malfatti S."/>
            <person name="Shin M."/>
            <person name="Vergez L."/>
            <person name="Schmutz J."/>
            <person name="Larimer F."/>
            <person name="Land M."/>
            <person name="Hauser L."/>
            <person name="Kyrpides N."/>
            <person name="Mikhailova N."/>
            <person name="Reeve W.G."/>
            <person name="Richardson P."/>
        </authorList>
    </citation>
    <scope>NUCLEOTIDE SEQUENCE [LARGE SCALE GENOMIC DNA]</scope>
    <source>
        <strain>WSM419</strain>
    </source>
</reference>
<sequence>MPLIDLPGFAGDLLADFERRNTLRVDTPVIQPAEPFLDMAGEDLRRRIFMTESETGESLCLRPEFTIPVCLRHIETATGTPQRYAYLGEVFRQRRDGSSEFYQAGIEDLGDPDTAAADARVVGDALFVLSNRLPGERLKVTLGDQSVFEAVIAACGLPGGWQKRLIHAFGDQKQLDRLLAELADPKSPGVFGHDVERVAALGMLDDEERLVAHIGETMEATGYSTNASRSPRDIARRLKEKVELAATRLDKEALAVMRAFLALDLPLADAPAALHSFAGKARLRIDDALELFDARVAALALAGADPGPMRYRAAFGRPLDYYTGLVFEIHVEGTPAVLAGGGRFDRLLTLLGAREHIPAVGFSLWLDRIEQAAGREK</sequence>
<organism>
    <name type="scientific">Sinorhizobium medicae (strain WSM419)</name>
    <name type="common">Ensifer medicae</name>
    <dbReference type="NCBI Taxonomy" id="366394"/>
    <lineage>
        <taxon>Bacteria</taxon>
        <taxon>Pseudomonadati</taxon>
        <taxon>Pseudomonadota</taxon>
        <taxon>Alphaproteobacteria</taxon>
        <taxon>Hyphomicrobiales</taxon>
        <taxon>Rhizobiaceae</taxon>
        <taxon>Sinorhizobium/Ensifer group</taxon>
        <taxon>Sinorhizobium</taxon>
    </lineage>
</organism>
<feature type="chain" id="PRO_1000016284" description="ATP phosphoribosyltransferase regulatory subunit">
    <location>
        <begin position="1"/>
        <end position="377"/>
    </location>
</feature>
<protein>
    <recommendedName>
        <fullName evidence="1">ATP phosphoribosyltransferase regulatory subunit</fullName>
    </recommendedName>
</protein>
<dbReference type="EMBL" id="CP000738">
    <property type="protein sequence ID" value="ABR59261.1"/>
    <property type="molecule type" value="Genomic_DNA"/>
</dbReference>
<dbReference type="RefSeq" id="WP_011974609.1">
    <property type="nucleotide sequence ID" value="NC_009636.1"/>
</dbReference>
<dbReference type="RefSeq" id="YP_001326096.1">
    <property type="nucleotide sequence ID" value="NC_009636.1"/>
</dbReference>
<dbReference type="SMR" id="A6U6I1"/>
<dbReference type="STRING" id="366394.Smed_0404"/>
<dbReference type="KEGG" id="smd:Smed_0404"/>
<dbReference type="PATRIC" id="fig|366394.8.peg.3483"/>
<dbReference type="eggNOG" id="COG3705">
    <property type="taxonomic scope" value="Bacteria"/>
</dbReference>
<dbReference type="HOGENOM" id="CLU_025113_6_0_5"/>
<dbReference type="OrthoDB" id="9797914at2"/>
<dbReference type="UniPathway" id="UPA00031">
    <property type="reaction ID" value="UER00006"/>
</dbReference>
<dbReference type="Proteomes" id="UP000001108">
    <property type="component" value="Chromosome"/>
</dbReference>
<dbReference type="GO" id="GO:0005737">
    <property type="term" value="C:cytoplasm"/>
    <property type="evidence" value="ECO:0007669"/>
    <property type="project" value="UniProtKB-SubCell"/>
</dbReference>
<dbReference type="GO" id="GO:0004821">
    <property type="term" value="F:histidine-tRNA ligase activity"/>
    <property type="evidence" value="ECO:0007669"/>
    <property type="project" value="TreeGrafter"/>
</dbReference>
<dbReference type="GO" id="GO:0006427">
    <property type="term" value="P:histidyl-tRNA aminoacylation"/>
    <property type="evidence" value="ECO:0007669"/>
    <property type="project" value="TreeGrafter"/>
</dbReference>
<dbReference type="GO" id="GO:0000105">
    <property type="term" value="P:L-histidine biosynthetic process"/>
    <property type="evidence" value="ECO:0007669"/>
    <property type="project" value="UniProtKB-UniRule"/>
</dbReference>
<dbReference type="Gene3D" id="3.30.930.10">
    <property type="entry name" value="Bira Bifunctional Protein, Domain 2"/>
    <property type="match status" value="1"/>
</dbReference>
<dbReference type="HAMAP" id="MF_00125">
    <property type="entry name" value="HisZ"/>
    <property type="match status" value="1"/>
</dbReference>
<dbReference type="InterPro" id="IPR045864">
    <property type="entry name" value="aa-tRNA-synth_II/BPL/LPL"/>
</dbReference>
<dbReference type="InterPro" id="IPR041715">
    <property type="entry name" value="HisRS-like_core"/>
</dbReference>
<dbReference type="InterPro" id="IPR004516">
    <property type="entry name" value="HisRS/HisZ"/>
</dbReference>
<dbReference type="InterPro" id="IPR004517">
    <property type="entry name" value="HisZ"/>
</dbReference>
<dbReference type="NCBIfam" id="NF008951">
    <property type="entry name" value="PRK12295.1-4"/>
    <property type="match status" value="1"/>
</dbReference>
<dbReference type="PANTHER" id="PTHR43707:SF1">
    <property type="entry name" value="HISTIDINE--TRNA LIGASE, MITOCHONDRIAL-RELATED"/>
    <property type="match status" value="1"/>
</dbReference>
<dbReference type="PANTHER" id="PTHR43707">
    <property type="entry name" value="HISTIDYL-TRNA SYNTHETASE"/>
    <property type="match status" value="1"/>
</dbReference>
<dbReference type="Pfam" id="PF13393">
    <property type="entry name" value="tRNA-synt_His"/>
    <property type="match status" value="2"/>
</dbReference>
<dbReference type="PIRSF" id="PIRSF001549">
    <property type="entry name" value="His-tRNA_synth"/>
    <property type="match status" value="1"/>
</dbReference>
<dbReference type="SUPFAM" id="SSF55681">
    <property type="entry name" value="Class II aaRS and biotin synthetases"/>
    <property type="match status" value="1"/>
</dbReference>
<evidence type="ECO:0000255" key="1">
    <source>
        <dbReference type="HAMAP-Rule" id="MF_00125"/>
    </source>
</evidence>
<proteinExistence type="inferred from homology"/>